<comment type="function">
    <text evidence="4 8">Involved in the biosynthesis of prenylated phenolics natural products which contribute to the bitter taste of beer and display broad biological activities (Probable). Catalyzes the ligation of CoA on propanoate to produce propanoyl-CoA (PubMed:23300257). Can also use 2-methylpropanoate (isobutyric acid), acetate, butanoate, isovalerate, pentanoate, hexanoate, 2-methylbutanoate, 2-methylpentanoate, 3-methylpentanoate and 4-methylpentanoate as substrates with a lower efficiency (PubMed:23300257). Triggers the formation of very short chain acyl-CoAs from the corresponding fatty acids, including acetic acid, propanoic acid, butyric acid and its isomer (PubMed:23300257).</text>
</comment>
<comment type="catalytic activity">
    <reaction evidence="4">
        <text>acetate + ATP + CoA = acetyl-CoA + AMP + diphosphate</text>
        <dbReference type="Rhea" id="RHEA:23176"/>
        <dbReference type="ChEBI" id="CHEBI:30089"/>
        <dbReference type="ChEBI" id="CHEBI:30616"/>
        <dbReference type="ChEBI" id="CHEBI:33019"/>
        <dbReference type="ChEBI" id="CHEBI:57287"/>
        <dbReference type="ChEBI" id="CHEBI:57288"/>
        <dbReference type="ChEBI" id="CHEBI:456215"/>
        <dbReference type="EC" id="6.2.1.1"/>
    </reaction>
    <physiologicalReaction direction="left-to-right" evidence="4">
        <dbReference type="Rhea" id="RHEA:23177"/>
    </physiologicalReaction>
</comment>
<comment type="catalytic activity">
    <reaction evidence="4">
        <text>propanoate + ATP + CoA = propanoyl-CoA + AMP + diphosphate</text>
        <dbReference type="Rhea" id="RHEA:20373"/>
        <dbReference type="ChEBI" id="CHEBI:17272"/>
        <dbReference type="ChEBI" id="CHEBI:30616"/>
        <dbReference type="ChEBI" id="CHEBI:33019"/>
        <dbReference type="ChEBI" id="CHEBI:57287"/>
        <dbReference type="ChEBI" id="CHEBI:57392"/>
        <dbReference type="ChEBI" id="CHEBI:456215"/>
        <dbReference type="EC" id="6.2.1.17"/>
    </reaction>
    <physiologicalReaction direction="left-to-right" evidence="4">
        <dbReference type="Rhea" id="RHEA:20374"/>
    </physiologicalReaction>
</comment>
<comment type="catalytic activity">
    <reaction evidence="4">
        <text>butanoate + ATP + CoA = butanoyl-CoA + AMP + diphosphate</text>
        <dbReference type="Rhea" id="RHEA:46172"/>
        <dbReference type="ChEBI" id="CHEBI:17968"/>
        <dbReference type="ChEBI" id="CHEBI:30616"/>
        <dbReference type="ChEBI" id="CHEBI:33019"/>
        <dbReference type="ChEBI" id="CHEBI:57287"/>
        <dbReference type="ChEBI" id="CHEBI:57371"/>
        <dbReference type="ChEBI" id="CHEBI:456215"/>
    </reaction>
    <physiologicalReaction direction="left-to-right" evidence="4">
        <dbReference type="Rhea" id="RHEA:46173"/>
    </physiologicalReaction>
</comment>
<comment type="catalytic activity">
    <reaction evidence="4">
        <text>3-methylbutanoate + ATP + CoA = 3-methylbutanoyl-CoA + AMP + diphosphate</text>
        <dbReference type="Rhea" id="RHEA:46184"/>
        <dbReference type="ChEBI" id="CHEBI:30616"/>
        <dbReference type="ChEBI" id="CHEBI:33019"/>
        <dbReference type="ChEBI" id="CHEBI:48942"/>
        <dbReference type="ChEBI" id="CHEBI:57287"/>
        <dbReference type="ChEBI" id="CHEBI:57345"/>
        <dbReference type="ChEBI" id="CHEBI:456215"/>
    </reaction>
    <physiologicalReaction direction="left-to-right" evidence="4">
        <dbReference type="Rhea" id="RHEA:46185"/>
    </physiologicalReaction>
</comment>
<comment type="catalytic activity">
    <reaction evidence="4">
        <text>pentanoate + ATP + CoA = pentanoyl-CoA + AMP + diphosphate</text>
        <dbReference type="Rhea" id="RHEA:46168"/>
        <dbReference type="ChEBI" id="CHEBI:30616"/>
        <dbReference type="ChEBI" id="CHEBI:31011"/>
        <dbReference type="ChEBI" id="CHEBI:33019"/>
        <dbReference type="ChEBI" id="CHEBI:57287"/>
        <dbReference type="ChEBI" id="CHEBI:57389"/>
        <dbReference type="ChEBI" id="CHEBI:456215"/>
    </reaction>
    <physiologicalReaction direction="left-to-right" evidence="4">
        <dbReference type="Rhea" id="RHEA:46169"/>
    </physiologicalReaction>
</comment>
<comment type="catalytic activity">
    <reaction evidence="4">
        <text>hexanoate + ATP + CoA = hexanoyl-CoA + AMP + diphosphate</text>
        <dbReference type="Rhea" id="RHEA:43740"/>
        <dbReference type="ChEBI" id="CHEBI:17120"/>
        <dbReference type="ChEBI" id="CHEBI:30616"/>
        <dbReference type="ChEBI" id="CHEBI:33019"/>
        <dbReference type="ChEBI" id="CHEBI:57287"/>
        <dbReference type="ChEBI" id="CHEBI:62620"/>
        <dbReference type="ChEBI" id="CHEBI:456215"/>
    </reaction>
    <physiologicalReaction direction="left-to-right" evidence="4">
        <dbReference type="Rhea" id="RHEA:43741"/>
    </physiologicalReaction>
</comment>
<comment type="catalytic activity">
    <reaction evidence="4">
        <text>2-methylpropanoate + ATP + CoA = 2-methylpropanoyl-CoA + AMP + diphosphate</text>
        <dbReference type="Rhea" id="RHEA:46176"/>
        <dbReference type="ChEBI" id="CHEBI:30616"/>
        <dbReference type="ChEBI" id="CHEBI:33019"/>
        <dbReference type="ChEBI" id="CHEBI:48944"/>
        <dbReference type="ChEBI" id="CHEBI:57287"/>
        <dbReference type="ChEBI" id="CHEBI:57338"/>
        <dbReference type="ChEBI" id="CHEBI:456215"/>
    </reaction>
    <physiologicalReaction direction="left-to-right" evidence="4">
        <dbReference type="Rhea" id="RHEA:46177"/>
    </physiologicalReaction>
</comment>
<comment type="catalytic activity">
    <reaction evidence="4">
        <text>2-methylbutanoate + ATP + CoA = 2-methylbutanoyl-CoA + AMP + diphosphate</text>
        <dbReference type="Rhea" id="RHEA:46180"/>
        <dbReference type="ChEBI" id="CHEBI:30616"/>
        <dbReference type="ChEBI" id="CHEBI:33019"/>
        <dbReference type="ChEBI" id="CHEBI:48946"/>
        <dbReference type="ChEBI" id="CHEBI:57287"/>
        <dbReference type="ChEBI" id="CHEBI:57336"/>
        <dbReference type="ChEBI" id="CHEBI:456215"/>
    </reaction>
    <physiologicalReaction direction="left-to-right" evidence="4">
        <dbReference type="Rhea" id="RHEA:46181"/>
    </physiologicalReaction>
</comment>
<comment type="catalytic activity">
    <reaction evidence="4">
        <text>2-methylpentanoate + ATP + CoA = 2-methylpentanoyl-CoA + AMP + diphosphate</text>
        <dbReference type="Rhea" id="RHEA:66996"/>
        <dbReference type="ChEBI" id="CHEBI:30616"/>
        <dbReference type="ChEBI" id="CHEBI:33019"/>
        <dbReference type="ChEBI" id="CHEBI:57287"/>
        <dbReference type="ChEBI" id="CHEBI:167611"/>
        <dbReference type="ChEBI" id="CHEBI:167615"/>
        <dbReference type="ChEBI" id="CHEBI:456215"/>
    </reaction>
    <physiologicalReaction direction="left-to-right" evidence="4">
        <dbReference type="Rhea" id="RHEA:66997"/>
    </physiologicalReaction>
</comment>
<comment type="catalytic activity">
    <reaction evidence="4">
        <text>3-methylpentanoate + ATP + CoA = 3-methylpentanoyl-CoA + AMP + diphosphate</text>
        <dbReference type="Rhea" id="RHEA:66992"/>
        <dbReference type="ChEBI" id="CHEBI:30616"/>
        <dbReference type="ChEBI" id="CHEBI:33019"/>
        <dbReference type="ChEBI" id="CHEBI:57287"/>
        <dbReference type="ChEBI" id="CHEBI:167610"/>
        <dbReference type="ChEBI" id="CHEBI:167613"/>
        <dbReference type="ChEBI" id="CHEBI:456215"/>
    </reaction>
    <physiologicalReaction direction="left-to-right" evidence="4">
        <dbReference type="Rhea" id="RHEA:66993"/>
    </physiologicalReaction>
</comment>
<comment type="catalytic activity">
    <reaction evidence="4">
        <text>4-methylpentanoate + ATP + CoA = 4-methylpentanoyl-CoA + AMP + diphosphate</text>
        <dbReference type="Rhea" id="RHEA:66988"/>
        <dbReference type="ChEBI" id="CHEBI:30616"/>
        <dbReference type="ChEBI" id="CHEBI:33019"/>
        <dbReference type="ChEBI" id="CHEBI:57287"/>
        <dbReference type="ChEBI" id="CHEBI:74904"/>
        <dbReference type="ChEBI" id="CHEBI:131445"/>
        <dbReference type="ChEBI" id="CHEBI:456215"/>
    </reaction>
    <physiologicalReaction direction="left-to-right" evidence="4">
        <dbReference type="Rhea" id="RHEA:66989"/>
    </physiologicalReaction>
</comment>
<comment type="pathway">
    <text evidence="8">Secondary metabolite biosynthesis.</text>
</comment>
<comment type="subcellular location">
    <subcellularLocation>
        <location evidence="1">Cytoplasm</location>
        <location evidence="1">Cytosol</location>
    </subcellularLocation>
</comment>
<comment type="tissue specificity">
    <text evidence="4">Mostly expressed in glandular trichomes (lupulin glands) after flowering and in old leaves, and, to a lower extent, in stems, young leaves, cones and flowers.</text>
</comment>
<comment type="developmental stage">
    <text evidence="4">Accumulates progressively in glandular trichomes (lupulin glands) after flowering.</text>
</comment>
<comment type="domain">
    <text evidence="2">Both substrate-binding domains (SBD1 and SBD2) are involved in the substrate recognition, and are sufficient to confer the substrate specificity.</text>
</comment>
<comment type="similarity">
    <text evidence="6">Belongs to the ATP-dependent AMP-binding enzyme family.</text>
</comment>
<reference key="1">
    <citation type="journal article" date="2013" name="Mol. Plant">
        <title>Characterization of the formation of branched short-chain fatty acid:CoAs for bitter acid biosynthesis in hop glandular trichomes.</title>
        <authorList>
            <person name="Xu H."/>
            <person name="Zhang F."/>
            <person name="Liu B."/>
            <person name="Huhman D.V."/>
            <person name="Sumner L.W."/>
            <person name="Dixon R.A."/>
            <person name="Wang G."/>
        </authorList>
    </citation>
    <scope>NUCLEOTIDE SEQUENCE [MRNA]</scope>
    <scope>FUNCTION</scope>
    <scope>CATALYTIC ACTIVITY</scope>
    <scope>TISSUE SPECIFICITY</scope>
    <scope>DEVELOPMENTAL STAGE</scope>
    <scope>GENE FAMILY</scope>
    <scope>NOMENCLATURE</scope>
    <source>
        <strain>cv. Nugget</strain>
    </source>
</reference>
<reference key="2">
    <citation type="journal article" date="2019" name="Nat. Prod. Rep.">
        <title>Non-volatile natural products in plant glandular trichomes: chemistry, biological activities and biosynthesis.</title>
        <authorList>
            <person name="Liu Y."/>
            <person name="Jing S.-X."/>
            <person name="Luo S.-H."/>
            <person name="Li S.-H."/>
        </authorList>
    </citation>
    <scope>PATHWAY</scope>
    <scope>REVIEW</scope>
</reference>
<organism>
    <name type="scientific">Humulus lupulus</name>
    <name type="common">European hop</name>
    <dbReference type="NCBI Taxonomy" id="3486"/>
    <lineage>
        <taxon>Eukaryota</taxon>
        <taxon>Viridiplantae</taxon>
        <taxon>Streptophyta</taxon>
        <taxon>Embryophyta</taxon>
        <taxon>Tracheophyta</taxon>
        <taxon>Spermatophyta</taxon>
        <taxon>Magnoliopsida</taxon>
        <taxon>eudicotyledons</taxon>
        <taxon>Gunneridae</taxon>
        <taxon>Pentapetalae</taxon>
        <taxon>rosids</taxon>
        <taxon>fabids</taxon>
        <taxon>Rosales</taxon>
        <taxon>Cannabaceae</taxon>
        <taxon>Humulus</taxon>
    </lineage>
</organism>
<sequence length="568" mass="62015">MGMVGRDIDDLPKNAANYTALTPLWFLERAATVHPTRTSVIHGSRHYTWLQTYHRCRQFASALNNHSIGLGSTVAVIAPNVPALYEAHFAVPMAGAVVNCVNIRLNASTIAFLLGHSSAAAVMVDQEFFSLAEEALKILAQESKSHYKPPLLVVIGDESCDPKTLEYALKTGAIEYEKFLEGGDPEFDWKPPEDEWQSISLGYTSGTTASPKGVVLSHRGAYLMSLSASVVWGINEGAIYLWTLPMFHCNGWCYTWGMAAFCGTNICLRQVTAKGVYSAIAKYGVTHFCAAPVVLNTIVNAPPEEAIIPLPHLVHVMTAGAAPPPSVLFAMSEKGFKVAHTYGLSETYGPSTICAWKPEWDSLPPIKQARLNARQGVRYIALEGLDVVDTKTMKPVPADGTTMGEIVMRGNAVMKGYLKNPKANEESFADGWFHSGDLAVKHPDGYIEIKDRSKDIIISGGENISSLEVENTLYLHPAVLEVSVVARPDERWGESPCAFVTLKPNIDKSNEQVLAEDIIKFCKSKMPAYWVPKSVVFGPLPKTATGKIQKHVLRAKAKEMGALKKSNL</sequence>
<accession>M4IS88</accession>
<feature type="chain" id="PRO_0000452948" description="Acetate--CoA ligase CCL3">
    <location>
        <begin position="1"/>
        <end position="568"/>
    </location>
</feature>
<feature type="region of interest" description="SBD1" evidence="2">
    <location>
        <begin position="272"/>
        <end position="340"/>
    </location>
</feature>
<feature type="region of interest" description="SBD2" evidence="2">
    <location>
        <begin position="341"/>
        <end position="417"/>
    </location>
</feature>
<feature type="binding site" evidence="3">
    <location>
        <begin position="204"/>
        <end position="212"/>
    </location>
    <ligand>
        <name>ATP</name>
        <dbReference type="ChEBI" id="CHEBI:30616"/>
    </ligand>
</feature>
<feature type="binding site" evidence="3">
    <location>
        <begin position="340"/>
        <end position="345"/>
    </location>
    <ligand>
        <name>ATP</name>
        <dbReference type="ChEBI" id="CHEBI:30616"/>
    </ligand>
</feature>
<feature type="binding site" evidence="3">
    <location>
        <position position="437"/>
    </location>
    <ligand>
        <name>ATP</name>
        <dbReference type="ChEBI" id="CHEBI:30616"/>
    </ligand>
</feature>
<feature type="binding site" evidence="3">
    <location>
        <begin position="449"/>
        <end position="452"/>
    </location>
    <ligand>
        <name>ATP</name>
        <dbReference type="ChEBI" id="CHEBI:30616"/>
    </ligand>
</feature>
<feature type="binding site" evidence="3">
    <location>
        <position position="547"/>
    </location>
    <ligand>
        <name>ATP</name>
        <dbReference type="ChEBI" id="CHEBI:30616"/>
    </ligand>
</feature>
<evidence type="ECO:0000250" key="1">
    <source>
        <dbReference type="UniProtKB" id="M4IRL4"/>
    </source>
</evidence>
<evidence type="ECO:0000250" key="2">
    <source>
        <dbReference type="UniProtKB" id="Q42524"/>
    </source>
</evidence>
<evidence type="ECO:0000250" key="3">
    <source>
        <dbReference type="UniProtKB" id="Q81G39"/>
    </source>
</evidence>
<evidence type="ECO:0000269" key="4">
    <source>
    </source>
</evidence>
<evidence type="ECO:0000303" key="5">
    <source>
    </source>
</evidence>
<evidence type="ECO:0000305" key="6"/>
<evidence type="ECO:0000305" key="7">
    <source>
    </source>
</evidence>
<evidence type="ECO:0000305" key="8">
    <source>
    </source>
</evidence>
<keyword id="KW-0067">ATP-binding</keyword>
<keyword id="KW-0963">Cytoplasm</keyword>
<keyword id="KW-0436">Ligase</keyword>
<keyword id="KW-0547">Nucleotide-binding</keyword>
<name>CCL3_HUMLU</name>
<proteinExistence type="evidence at protein level"/>
<protein>
    <recommendedName>
        <fullName evidence="7">Acetate--CoA ligase CCL3</fullName>
        <shortName evidence="5">HlCCL3</shortName>
        <ecNumber evidence="4">6.2.1.1</ecNumber>
    </recommendedName>
    <alternativeName>
        <fullName evidence="7">2-methylbutanoate--CoA ligase CCL4</fullName>
        <ecNumber evidence="4">6.2.1.-</ecNumber>
    </alternativeName>
    <alternativeName>
        <fullName evidence="7">2-methylpropanoate--CoA ligase CCL4</fullName>
        <ecNumber evidence="4">6.2.1.-</ecNumber>
    </alternativeName>
    <alternativeName>
        <fullName evidence="7">Butanoate--CoA ligase CCL3</fullName>
        <ecNumber evidence="4">6.2.1.-</ecNumber>
    </alternativeName>
    <alternativeName>
        <fullName evidence="7">Hexanoate--CoA ligase CCL3</fullName>
        <ecNumber evidence="4">6.2.1.-</ecNumber>
    </alternativeName>
    <alternativeName>
        <fullName evidence="5">Isovalerate--CoA ligase CCL3</fullName>
        <ecNumber evidence="4">6.2.1.-</ecNumber>
    </alternativeName>
    <alternativeName>
        <fullName evidence="7">Pentanoate--CoA ligase CCL3</fullName>
        <ecNumber evidence="4">6.2.1.-</ecNumber>
    </alternativeName>
    <alternativeName>
        <fullName evidence="7">Propionate--CoA ligase CCL3</fullName>
        <ecNumber evidence="4">6.2.1.17</ecNumber>
    </alternativeName>
</protein>
<gene>
    <name evidence="5" type="primary">CCL3</name>
</gene>
<dbReference type="EC" id="6.2.1.1" evidence="4"/>
<dbReference type="EC" id="6.2.1.-" evidence="4"/>
<dbReference type="EC" id="6.2.1.17" evidence="4"/>
<dbReference type="EMBL" id="JQ740205">
    <property type="protein sequence ID" value="AGA17920.1"/>
    <property type="molecule type" value="mRNA"/>
</dbReference>
<dbReference type="SMR" id="M4IS88"/>
<dbReference type="GO" id="GO:0005829">
    <property type="term" value="C:cytosol"/>
    <property type="evidence" value="ECO:0000250"/>
    <property type="project" value="UniProtKB"/>
</dbReference>
<dbReference type="GO" id="GO:0043759">
    <property type="term" value="F:2-methylbutanoate-CoA ligase activity"/>
    <property type="evidence" value="ECO:0000314"/>
    <property type="project" value="UniProtKB"/>
</dbReference>
<dbReference type="GO" id="GO:0003987">
    <property type="term" value="F:acetate-CoA ligase activity"/>
    <property type="evidence" value="ECO:0000314"/>
    <property type="project" value="UniProtKB"/>
</dbReference>
<dbReference type="GO" id="GO:0005524">
    <property type="term" value="F:ATP binding"/>
    <property type="evidence" value="ECO:0007669"/>
    <property type="project" value="UniProtKB-KW"/>
</dbReference>
<dbReference type="GO" id="GO:0016405">
    <property type="term" value="F:CoA-ligase activity"/>
    <property type="evidence" value="ECO:0000314"/>
    <property type="project" value="UniProtKB"/>
</dbReference>
<dbReference type="GO" id="GO:0031956">
    <property type="term" value="F:medium-chain fatty acid-CoA ligase activity"/>
    <property type="evidence" value="ECO:0000314"/>
    <property type="project" value="UniProtKB"/>
</dbReference>
<dbReference type="GO" id="GO:0050218">
    <property type="term" value="F:propionate-CoA ligase activity"/>
    <property type="evidence" value="ECO:0000314"/>
    <property type="project" value="UniProtKB"/>
</dbReference>
<dbReference type="CDD" id="cd12118">
    <property type="entry name" value="ttLC_FACS_AEE21_like"/>
    <property type="match status" value="1"/>
</dbReference>
<dbReference type="FunFam" id="3.30.300.30:FF:000008">
    <property type="entry name" value="2,3-dihydroxybenzoate-AMP ligase"/>
    <property type="match status" value="1"/>
</dbReference>
<dbReference type="FunFam" id="3.40.50.12780:FF:000003">
    <property type="entry name" value="Long-chain-fatty-acid--CoA ligase FadD"/>
    <property type="match status" value="1"/>
</dbReference>
<dbReference type="Gene3D" id="3.30.300.30">
    <property type="match status" value="1"/>
</dbReference>
<dbReference type="Gene3D" id="3.40.50.12780">
    <property type="entry name" value="N-terminal domain of ligase-like"/>
    <property type="match status" value="1"/>
</dbReference>
<dbReference type="InterPro" id="IPR025110">
    <property type="entry name" value="AMP-bd_C"/>
</dbReference>
<dbReference type="InterPro" id="IPR045851">
    <property type="entry name" value="AMP-bd_C_sf"/>
</dbReference>
<dbReference type="InterPro" id="IPR000873">
    <property type="entry name" value="AMP-dep_synth/lig_dom"/>
</dbReference>
<dbReference type="InterPro" id="IPR042099">
    <property type="entry name" value="ANL_N_sf"/>
</dbReference>
<dbReference type="NCBIfam" id="NF006020">
    <property type="entry name" value="PRK08162.1"/>
    <property type="match status" value="1"/>
</dbReference>
<dbReference type="PANTHER" id="PTHR43859:SF7">
    <property type="entry name" value="ACETATE_BUTYRATE--COA LIGASE AAE7, PEROXISOMAL"/>
    <property type="match status" value="1"/>
</dbReference>
<dbReference type="PANTHER" id="PTHR43859">
    <property type="entry name" value="ACYL-ACTIVATING ENZYME"/>
    <property type="match status" value="1"/>
</dbReference>
<dbReference type="Pfam" id="PF00501">
    <property type="entry name" value="AMP-binding"/>
    <property type="match status" value="1"/>
</dbReference>
<dbReference type="Pfam" id="PF13193">
    <property type="entry name" value="AMP-binding_C"/>
    <property type="match status" value="1"/>
</dbReference>
<dbReference type="SUPFAM" id="SSF56801">
    <property type="entry name" value="Acetyl-CoA synthetase-like"/>
    <property type="match status" value="1"/>
</dbReference>